<keyword id="KW-1003">Cell membrane</keyword>
<keyword id="KW-0249">Electron transport</keyword>
<keyword id="KW-0274">FAD</keyword>
<keyword id="KW-0285">Flavoprotein</keyword>
<keyword id="KW-0472">Membrane</keyword>
<keyword id="KW-0547">Nucleotide-binding</keyword>
<keyword id="KW-0560">Oxidoreductase</keyword>
<keyword id="KW-1185">Reference proteome</keyword>
<keyword id="KW-0813">Transport</keyword>
<reference key="1">
    <citation type="journal article" date="1998" name="Nature">
        <title>Deciphering the biology of Mycobacterium tuberculosis from the complete genome sequence.</title>
        <authorList>
            <person name="Cole S.T."/>
            <person name="Brosch R."/>
            <person name="Parkhill J."/>
            <person name="Garnier T."/>
            <person name="Churcher C.M."/>
            <person name="Harris D.E."/>
            <person name="Gordon S.V."/>
            <person name="Eiglmeier K."/>
            <person name="Gas S."/>
            <person name="Barry C.E. III"/>
            <person name="Tekaia F."/>
            <person name="Badcock K."/>
            <person name="Basham D."/>
            <person name="Brown D."/>
            <person name="Chillingworth T."/>
            <person name="Connor R."/>
            <person name="Davies R.M."/>
            <person name="Devlin K."/>
            <person name="Feltwell T."/>
            <person name="Gentles S."/>
            <person name="Hamlin N."/>
            <person name="Holroyd S."/>
            <person name="Hornsby T."/>
            <person name="Jagels K."/>
            <person name="Krogh A."/>
            <person name="McLean J."/>
            <person name="Moule S."/>
            <person name="Murphy L.D."/>
            <person name="Oliver S."/>
            <person name="Osborne J."/>
            <person name="Quail M.A."/>
            <person name="Rajandream M.A."/>
            <person name="Rogers J."/>
            <person name="Rutter S."/>
            <person name="Seeger K."/>
            <person name="Skelton S."/>
            <person name="Squares S."/>
            <person name="Squares R."/>
            <person name="Sulston J.E."/>
            <person name="Taylor K."/>
            <person name="Whitehead S."/>
            <person name="Barrell B.G."/>
        </authorList>
    </citation>
    <scope>NUCLEOTIDE SEQUENCE [LARGE SCALE GENOMIC DNA]</scope>
    <source>
        <strain>ATCC 25618 / H37Rv</strain>
    </source>
</reference>
<reference key="2">
    <citation type="journal article" date="2011" name="Mol. Cell. Proteomics">
        <title>Proteogenomic analysis of Mycobacterium tuberculosis by high resolution mass spectrometry.</title>
        <authorList>
            <person name="Kelkar D.S."/>
            <person name="Kumar D."/>
            <person name="Kumar P."/>
            <person name="Balakrishnan L."/>
            <person name="Muthusamy B."/>
            <person name="Yadav A.K."/>
            <person name="Shrivastava P."/>
            <person name="Marimuthu A."/>
            <person name="Anand S."/>
            <person name="Sundaram H."/>
            <person name="Kingsbury R."/>
            <person name="Harsha H.C."/>
            <person name="Nair B."/>
            <person name="Prasad T.S."/>
            <person name="Chauhan D.S."/>
            <person name="Katoch K."/>
            <person name="Katoch V.M."/>
            <person name="Kumar P."/>
            <person name="Chaerkady R."/>
            <person name="Ramachandran S."/>
            <person name="Dash D."/>
            <person name="Pandey A."/>
        </authorList>
    </citation>
    <scope>IDENTIFICATION BY MASS SPECTROMETRY [LARGE SCALE ANALYSIS]</scope>
    <source>
        <strain>ATCC 25618 / H37Rv</strain>
    </source>
</reference>
<evidence type="ECO:0000250" key="1">
    <source>
        <dbReference type="UniProtKB" id="P00363"/>
    </source>
</evidence>
<evidence type="ECO:0000305" key="2"/>
<organism>
    <name type="scientific">Mycobacterium tuberculosis (strain ATCC 25618 / H37Rv)</name>
    <dbReference type="NCBI Taxonomy" id="83332"/>
    <lineage>
        <taxon>Bacteria</taxon>
        <taxon>Bacillati</taxon>
        <taxon>Actinomycetota</taxon>
        <taxon>Actinomycetes</taxon>
        <taxon>Mycobacteriales</taxon>
        <taxon>Mycobacteriaceae</taxon>
        <taxon>Mycobacterium</taxon>
        <taxon>Mycobacterium tuberculosis complex</taxon>
    </lineage>
</organism>
<gene>
    <name type="primary">frdA</name>
    <name type="ordered locus">Rv1552</name>
    <name type="ORF">MTCY48.13c</name>
</gene>
<proteinExistence type="evidence at protein level"/>
<dbReference type="EC" id="1.3.5.1" evidence="1"/>
<dbReference type="EMBL" id="AL123456">
    <property type="protein sequence ID" value="CCP44316.1"/>
    <property type="molecule type" value="Genomic_DNA"/>
</dbReference>
<dbReference type="PIR" id="E70762">
    <property type="entry name" value="E70762"/>
</dbReference>
<dbReference type="RefSeq" id="NP_216068.1">
    <property type="nucleotide sequence ID" value="NC_000962.3"/>
</dbReference>
<dbReference type="RefSeq" id="WP_003898925.1">
    <property type="nucleotide sequence ID" value="NZ_NVQJ01000004.1"/>
</dbReference>
<dbReference type="SMR" id="P9WN91"/>
<dbReference type="FunCoup" id="P9WN91">
    <property type="interactions" value="203"/>
</dbReference>
<dbReference type="STRING" id="83332.Rv1552"/>
<dbReference type="PaxDb" id="83332-Rv1552"/>
<dbReference type="DNASU" id="886376"/>
<dbReference type="GeneID" id="45425535"/>
<dbReference type="GeneID" id="886376"/>
<dbReference type="KEGG" id="mtu:Rv1552"/>
<dbReference type="KEGG" id="mtv:RVBD_1552"/>
<dbReference type="TubercuList" id="Rv1552"/>
<dbReference type="eggNOG" id="COG1053">
    <property type="taxonomic scope" value="Bacteria"/>
</dbReference>
<dbReference type="InParanoid" id="P9WN91"/>
<dbReference type="OrthoDB" id="9805351at2"/>
<dbReference type="PhylomeDB" id="P9WN91"/>
<dbReference type="Proteomes" id="UP000001584">
    <property type="component" value="Chromosome"/>
</dbReference>
<dbReference type="GO" id="GO:0005886">
    <property type="term" value="C:plasma membrane"/>
    <property type="evidence" value="ECO:0007005"/>
    <property type="project" value="MTBBASE"/>
</dbReference>
<dbReference type="GO" id="GO:0009055">
    <property type="term" value="F:electron transfer activity"/>
    <property type="evidence" value="ECO:0000318"/>
    <property type="project" value="GO_Central"/>
</dbReference>
<dbReference type="GO" id="GO:0050660">
    <property type="term" value="F:flavin adenine dinucleotide binding"/>
    <property type="evidence" value="ECO:0000318"/>
    <property type="project" value="GO_Central"/>
</dbReference>
<dbReference type="GO" id="GO:0033765">
    <property type="term" value="F:steroid dehydrogenase activity, acting on the CH-CH group of donors"/>
    <property type="evidence" value="ECO:0007669"/>
    <property type="project" value="UniProtKB-ARBA"/>
</dbReference>
<dbReference type="GO" id="GO:0008177">
    <property type="term" value="F:succinate dehydrogenase (quinone) activity"/>
    <property type="evidence" value="ECO:0007669"/>
    <property type="project" value="RHEA"/>
</dbReference>
<dbReference type="GO" id="GO:0000104">
    <property type="term" value="F:succinate dehydrogenase activity"/>
    <property type="evidence" value="ECO:0000318"/>
    <property type="project" value="GO_Central"/>
</dbReference>
<dbReference type="GO" id="GO:0009061">
    <property type="term" value="P:anaerobic respiration"/>
    <property type="evidence" value="ECO:0000318"/>
    <property type="project" value="GO_Central"/>
</dbReference>
<dbReference type="GO" id="GO:0022900">
    <property type="term" value="P:electron transport chain"/>
    <property type="evidence" value="ECO:0007669"/>
    <property type="project" value="InterPro"/>
</dbReference>
<dbReference type="FunFam" id="3.90.700.10:FF:000003">
    <property type="entry name" value="Fumarate reductase flavoprotein subunit"/>
    <property type="match status" value="1"/>
</dbReference>
<dbReference type="FunFam" id="4.10.80.40:FF:000003">
    <property type="entry name" value="Fumarate reductase flavoprotein subunit"/>
    <property type="match status" value="1"/>
</dbReference>
<dbReference type="FunFam" id="1.20.58.100:FF:000001">
    <property type="entry name" value="Succinate dehydrogenase flavoprotein subunit (SdhA)"/>
    <property type="match status" value="1"/>
</dbReference>
<dbReference type="Gene3D" id="3.50.50.60">
    <property type="entry name" value="FAD/NAD(P)-binding domain"/>
    <property type="match status" value="1"/>
</dbReference>
<dbReference type="Gene3D" id="1.20.58.100">
    <property type="entry name" value="Fumarate reductase/succinate dehydrogenase flavoprotein-like, C-terminal domain"/>
    <property type="match status" value="1"/>
</dbReference>
<dbReference type="Gene3D" id="4.10.80.40">
    <property type="entry name" value="succinate dehydrogenase protein domain"/>
    <property type="match status" value="1"/>
</dbReference>
<dbReference type="Gene3D" id="3.90.700.10">
    <property type="entry name" value="Succinate dehydrogenase/fumarate reductase flavoprotein, catalytic domain"/>
    <property type="match status" value="1"/>
</dbReference>
<dbReference type="InterPro" id="IPR003953">
    <property type="entry name" value="FAD-dep_OxRdtase_2_FAD-bd"/>
</dbReference>
<dbReference type="InterPro" id="IPR036188">
    <property type="entry name" value="FAD/NAD-bd_sf"/>
</dbReference>
<dbReference type="InterPro" id="IPR003952">
    <property type="entry name" value="FRD_SDH_FAD_BS"/>
</dbReference>
<dbReference type="InterPro" id="IPR037099">
    <property type="entry name" value="Fum_R/Succ_DH_flav-like_C_sf"/>
</dbReference>
<dbReference type="InterPro" id="IPR015939">
    <property type="entry name" value="Fum_Rdtase/Succ_DH_flav-like_C"/>
</dbReference>
<dbReference type="InterPro" id="IPR005884">
    <property type="entry name" value="Fum_red_fp"/>
</dbReference>
<dbReference type="InterPro" id="IPR030664">
    <property type="entry name" value="SdhA/FrdA/AprA"/>
</dbReference>
<dbReference type="InterPro" id="IPR027477">
    <property type="entry name" value="Succ_DH/fumarate_Rdtase_cat_sf"/>
</dbReference>
<dbReference type="InterPro" id="IPR014006">
    <property type="entry name" value="Succ_Dhase_FrdA_Gneg"/>
</dbReference>
<dbReference type="NCBIfam" id="TIGR01176">
    <property type="entry name" value="fum_red_Fp"/>
    <property type="match status" value="1"/>
</dbReference>
<dbReference type="NCBIfam" id="NF006686">
    <property type="entry name" value="PRK09231.1"/>
    <property type="match status" value="1"/>
</dbReference>
<dbReference type="NCBIfam" id="TIGR01812">
    <property type="entry name" value="sdhA_frdA_Gneg"/>
    <property type="match status" value="1"/>
</dbReference>
<dbReference type="PANTHER" id="PTHR11632:SF82">
    <property type="entry name" value="FUMARATE REDUCTASE FLAVOPROTEIN SUBUNIT"/>
    <property type="match status" value="1"/>
</dbReference>
<dbReference type="PANTHER" id="PTHR11632">
    <property type="entry name" value="SUCCINATE DEHYDROGENASE 2 FLAVOPROTEIN SUBUNIT"/>
    <property type="match status" value="1"/>
</dbReference>
<dbReference type="Pfam" id="PF00890">
    <property type="entry name" value="FAD_binding_2"/>
    <property type="match status" value="1"/>
</dbReference>
<dbReference type="Pfam" id="PF02910">
    <property type="entry name" value="Succ_DH_flav_C"/>
    <property type="match status" value="1"/>
</dbReference>
<dbReference type="PIRSF" id="PIRSF000171">
    <property type="entry name" value="SDHA_APRA_LASPO"/>
    <property type="match status" value="1"/>
</dbReference>
<dbReference type="PRINTS" id="PR00368">
    <property type="entry name" value="FADPNR"/>
</dbReference>
<dbReference type="SUPFAM" id="SSF51905">
    <property type="entry name" value="FAD/NAD(P)-binding domain"/>
    <property type="match status" value="1"/>
</dbReference>
<dbReference type="SUPFAM" id="SSF46977">
    <property type="entry name" value="Succinate dehydrogenase/fumarate reductase flavoprotein C-terminal domain"/>
    <property type="match status" value="1"/>
</dbReference>
<dbReference type="SUPFAM" id="SSF56425">
    <property type="entry name" value="Succinate dehydrogenase/fumarate reductase flavoprotein, catalytic domain"/>
    <property type="match status" value="1"/>
</dbReference>
<dbReference type="PROSITE" id="PS00504">
    <property type="entry name" value="FRD_SDH_FAD_BINDING"/>
    <property type="match status" value="1"/>
</dbReference>
<accession>P9WN91</accession>
<accession>L0T702</accession>
<accession>P64174</accession>
<accession>Q10760</accession>
<name>FRDA_MYCTU</name>
<sequence>MTAQHNIVVIGGGGAGLRAAIAIAETNPHLDVAIVSKVYPMRSHTVSAEGGAAAVTGDDDSLDEHAHDTVSGGDWLCDQDAVEAFVAEAPKELVQLEHWGCPWSRKPDGRVAVRPFGGMKKLRTWFAADKTGFHLLHTLFQRLLTYSDVMRYDEWFATTLLVDDGRVCGLVAIELATGRIETILADAVILCTGGCGRVFPFTTNANIKTGDGMALAFRAGAPLKDMEFVQYHPTGLPFTGILITEAARAEGGWLLNKDGYRYLQDYDLGKPTPEPRLRSMELGPRDRLSQAFVHEHNKGRTVDTPYGPVVYLDLRHLGADLIDAKLPFVRELCRDYQHIDPVVELVPVRPVVHYMMGGVHTDINGATTLPGLYAAGETACVSINGANRLGSNSLPELLVFGARAGRAAADYAARHQKSDRGPSSAVRAQARTEALRLERELSRHGQGGERIADIRADMQATLESAAGIYRDGPTLTKAVEEIRVLQERFATAGIDDHSRTFNTELTALLELSGMLDVALAIVESGLRREESRGAHQRTDFPNRDDEHFLAHTLVHRESDGTLRVGYLPVTITRWPPGERVYGR</sequence>
<comment type="catalytic activity">
    <reaction evidence="1">
        <text>a quinone + succinate = fumarate + a quinol</text>
        <dbReference type="Rhea" id="RHEA:40523"/>
        <dbReference type="ChEBI" id="CHEBI:24646"/>
        <dbReference type="ChEBI" id="CHEBI:29806"/>
        <dbReference type="ChEBI" id="CHEBI:30031"/>
        <dbReference type="ChEBI" id="CHEBI:132124"/>
        <dbReference type="EC" id="1.3.5.1"/>
    </reaction>
</comment>
<comment type="catalytic activity">
    <reaction evidence="1">
        <text>a menaquinone + succinate = a menaquinol + fumarate</text>
        <dbReference type="Rhea" id="RHEA:27834"/>
        <dbReference type="Rhea" id="RHEA-COMP:9537"/>
        <dbReference type="Rhea" id="RHEA-COMP:9539"/>
        <dbReference type="ChEBI" id="CHEBI:16374"/>
        <dbReference type="ChEBI" id="CHEBI:18151"/>
        <dbReference type="ChEBI" id="CHEBI:29806"/>
        <dbReference type="ChEBI" id="CHEBI:30031"/>
        <dbReference type="EC" id="1.3.5.1"/>
    </reaction>
</comment>
<comment type="cofactor">
    <cofactor evidence="1">
        <name>FAD</name>
        <dbReference type="ChEBI" id="CHEBI:57692"/>
    </cofactor>
    <text evidence="1">Binds 1 FAD covalently per subunit.</text>
</comment>
<comment type="subunit">
    <text evidence="1">Part of an enzyme complex containing four subunits: a flavoprotein (FrdA), an iron-sulfur protein (FrdB), and two hydrophobic anchor proteins (FrdC and FrdD).</text>
</comment>
<comment type="subcellular location">
    <subcellularLocation>
        <location evidence="1">Cell membrane</location>
        <topology evidence="1">Peripheral membrane protein</topology>
        <orientation evidence="1">Cytoplasmic side</orientation>
    </subcellularLocation>
</comment>
<comment type="similarity">
    <text evidence="2">Belongs to the FAD-dependent oxidoreductase 2 family. FRD/SDH subfamily.</text>
</comment>
<feature type="chain" id="PRO_0000158664" description="Fumarate reductase flavoprotein subunit">
    <location>
        <begin position="1"/>
        <end position="583"/>
    </location>
</feature>
<feature type="active site" evidence="1">
    <location>
        <position position="232"/>
    </location>
</feature>
<feature type="active site" evidence="1">
    <location>
        <position position="248"/>
    </location>
</feature>
<feature type="binding site" evidence="1">
    <location>
        <begin position="11"/>
        <end position="15"/>
    </location>
    <ligand>
        <name>FAD</name>
        <dbReference type="ChEBI" id="CHEBI:57692"/>
    </ligand>
</feature>
<feature type="binding site" evidence="1">
    <location>
        <begin position="35"/>
        <end position="37"/>
    </location>
    <ligand>
        <name>FAD</name>
        <dbReference type="ChEBI" id="CHEBI:57692"/>
    </ligand>
</feature>
<feature type="binding site" evidence="1">
    <location>
        <begin position="43"/>
        <end position="51"/>
    </location>
    <ligand>
        <name>FAD</name>
        <dbReference type="ChEBI" id="CHEBI:57692"/>
    </ligand>
</feature>
<feature type="binding site" evidence="1">
    <location>
        <begin position="155"/>
        <end position="157"/>
    </location>
    <ligand>
        <name>FAD</name>
        <dbReference type="ChEBI" id="CHEBI:57692"/>
    </ligand>
</feature>
<feature type="binding site" evidence="1">
    <location>
        <position position="211"/>
    </location>
    <ligand>
        <name>FAD</name>
        <dbReference type="ChEBI" id="CHEBI:57692"/>
    </ligand>
</feature>
<feature type="binding site" evidence="1">
    <location>
        <begin position="353"/>
        <end position="354"/>
    </location>
    <ligand>
        <name>FAD</name>
        <dbReference type="ChEBI" id="CHEBI:57692"/>
    </ligand>
</feature>
<feature type="binding site" evidence="1">
    <location>
        <position position="377"/>
    </location>
    <ligand>
        <name>FAD</name>
        <dbReference type="ChEBI" id="CHEBI:57692"/>
    </ligand>
</feature>
<feature type="binding site" evidence="1">
    <location>
        <begin position="388"/>
        <end position="394"/>
    </location>
    <ligand>
        <name>FAD</name>
        <dbReference type="ChEBI" id="CHEBI:57692"/>
    </ligand>
</feature>
<feature type="modified residue" description="Tele-8alpha-FAD histidine" evidence="1">
    <location>
        <position position="44"/>
    </location>
</feature>
<protein>
    <recommendedName>
        <fullName>Fumarate reductase flavoprotein subunit</fullName>
        <ecNumber evidence="1">1.3.5.1</ecNumber>
    </recommendedName>
    <alternativeName>
        <fullName evidence="2">Quinol-fumarate reductase flavoprotein subunit</fullName>
        <shortName evidence="2">QFR flavoprotein subunit</shortName>
    </alternativeName>
</protein>